<feature type="chain" id="PRO_1000058829" description="Adenylate kinase">
    <location>
        <begin position="1"/>
        <end position="218"/>
    </location>
</feature>
<feature type="region of interest" description="NMP" evidence="1">
    <location>
        <begin position="30"/>
        <end position="59"/>
    </location>
</feature>
<feature type="region of interest" description="LID" evidence="1">
    <location>
        <begin position="122"/>
        <end position="159"/>
    </location>
</feature>
<feature type="binding site" evidence="1">
    <location>
        <begin position="10"/>
        <end position="15"/>
    </location>
    <ligand>
        <name>ATP</name>
        <dbReference type="ChEBI" id="CHEBI:30616"/>
    </ligand>
</feature>
<feature type="binding site" evidence="1">
    <location>
        <position position="31"/>
    </location>
    <ligand>
        <name>AMP</name>
        <dbReference type="ChEBI" id="CHEBI:456215"/>
    </ligand>
</feature>
<feature type="binding site" evidence="1">
    <location>
        <position position="36"/>
    </location>
    <ligand>
        <name>AMP</name>
        <dbReference type="ChEBI" id="CHEBI:456215"/>
    </ligand>
</feature>
<feature type="binding site" evidence="1">
    <location>
        <begin position="57"/>
        <end position="59"/>
    </location>
    <ligand>
        <name>AMP</name>
        <dbReference type="ChEBI" id="CHEBI:456215"/>
    </ligand>
</feature>
<feature type="binding site" evidence="1">
    <location>
        <position position="92"/>
    </location>
    <ligand>
        <name>AMP</name>
        <dbReference type="ChEBI" id="CHEBI:456215"/>
    </ligand>
</feature>
<feature type="binding site" evidence="1">
    <location>
        <position position="123"/>
    </location>
    <ligand>
        <name>ATP</name>
        <dbReference type="ChEBI" id="CHEBI:30616"/>
    </ligand>
</feature>
<feature type="binding site" evidence="1">
    <location>
        <begin position="132"/>
        <end position="133"/>
    </location>
    <ligand>
        <name>ATP</name>
        <dbReference type="ChEBI" id="CHEBI:30616"/>
    </ligand>
</feature>
<feature type="binding site" evidence="1">
    <location>
        <position position="156"/>
    </location>
    <ligand>
        <name>AMP</name>
        <dbReference type="ChEBI" id="CHEBI:456215"/>
    </ligand>
</feature>
<feature type="binding site" evidence="1">
    <location>
        <position position="167"/>
    </location>
    <ligand>
        <name>AMP</name>
        <dbReference type="ChEBI" id="CHEBI:456215"/>
    </ligand>
</feature>
<feature type="binding site" evidence="1">
    <location>
        <position position="202"/>
    </location>
    <ligand>
        <name>ATP</name>
        <dbReference type="ChEBI" id="CHEBI:30616"/>
    </ligand>
</feature>
<sequence>MRIILLGAPGAGKGTQAKIIEQKYNIAHISTGDMIRETIKSGSVLGQELKKVLDAGELVSDEFIIKIVKDRISKNDCNNGFLLDGVPRTIPQAQELDKLGVNIDYIVEVDVADNLLIERITGRRIHPASGRTYHTKFNPPKVADKDDVTGEPLITRTDDNEDTVKQRLSVYHAQTAKLIDFYRNFSSTNTKIPKYIKINGDQAVEKVSQDIFDQLNKR</sequence>
<dbReference type="EC" id="2.7.4.3" evidence="1"/>
<dbReference type="EMBL" id="AM233362">
    <property type="protein sequence ID" value="CAJ79234.1"/>
    <property type="molecule type" value="Genomic_DNA"/>
</dbReference>
<dbReference type="RefSeq" id="WP_003015336.1">
    <property type="nucleotide sequence ID" value="NZ_CP009694.1"/>
</dbReference>
<dbReference type="SMR" id="Q2A425"/>
<dbReference type="KEGG" id="ftl:FTL_0795"/>
<dbReference type="UniPathway" id="UPA00588">
    <property type="reaction ID" value="UER00649"/>
</dbReference>
<dbReference type="Proteomes" id="UP000001944">
    <property type="component" value="Chromosome"/>
</dbReference>
<dbReference type="GO" id="GO:0005737">
    <property type="term" value="C:cytoplasm"/>
    <property type="evidence" value="ECO:0007669"/>
    <property type="project" value="UniProtKB-SubCell"/>
</dbReference>
<dbReference type="GO" id="GO:0004017">
    <property type="term" value="F:adenylate kinase activity"/>
    <property type="evidence" value="ECO:0007669"/>
    <property type="project" value="UniProtKB-UniRule"/>
</dbReference>
<dbReference type="GO" id="GO:0005524">
    <property type="term" value="F:ATP binding"/>
    <property type="evidence" value="ECO:0007669"/>
    <property type="project" value="UniProtKB-UniRule"/>
</dbReference>
<dbReference type="GO" id="GO:0044209">
    <property type="term" value="P:AMP salvage"/>
    <property type="evidence" value="ECO:0007669"/>
    <property type="project" value="UniProtKB-UniRule"/>
</dbReference>
<dbReference type="CDD" id="cd01428">
    <property type="entry name" value="ADK"/>
    <property type="match status" value="1"/>
</dbReference>
<dbReference type="FunFam" id="3.40.50.300:FF:000106">
    <property type="entry name" value="Adenylate kinase mitochondrial"/>
    <property type="match status" value="1"/>
</dbReference>
<dbReference type="Gene3D" id="3.40.50.300">
    <property type="entry name" value="P-loop containing nucleotide triphosphate hydrolases"/>
    <property type="match status" value="1"/>
</dbReference>
<dbReference type="HAMAP" id="MF_00235">
    <property type="entry name" value="Adenylate_kinase_Adk"/>
    <property type="match status" value="1"/>
</dbReference>
<dbReference type="InterPro" id="IPR006259">
    <property type="entry name" value="Adenyl_kin_sub"/>
</dbReference>
<dbReference type="InterPro" id="IPR000850">
    <property type="entry name" value="Adenylat/UMP-CMP_kin"/>
</dbReference>
<dbReference type="InterPro" id="IPR007862">
    <property type="entry name" value="Adenylate_kinase_lid-dom"/>
</dbReference>
<dbReference type="InterPro" id="IPR027417">
    <property type="entry name" value="P-loop_NTPase"/>
</dbReference>
<dbReference type="NCBIfam" id="TIGR01351">
    <property type="entry name" value="adk"/>
    <property type="match status" value="1"/>
</dbReference>
<dbReference type="NCBIfam" id="NF001379">
    <property type="entry name" value="PRK00279.1-1"/>
    <property type="match status" value="1"/>
</dbReference>
<dbReference type="NCBIfam" id="NF001380">
    <property type="entry name" value="PRK00279.1-2"/>
    <property type="match status" value="1"/>
</dbReference>
<dbReference type="NCBIfam" id="NF001381">
    <property type="entry name" value="PRK00279.1-3"/>
    <property type="match status" value="1"/>
</dbReference>
<dbReference type="PANTHER" id="PTHR23359">
    <property type="entry name" value="NUCLEOTIDE KINASE"/>
    <property type="match status" value="1"/>
</dbReference>
<dbReference type="Pfam" id="PF00406">
    <property type="entry name" value="ADK"/>
    <property type="match status" value="1"/>
</dbReference>
<dbReference type="Pfam" id="PF05191">
    <property type="entry name" value="ADK_lid"/>
    <property type="match status" value="1"/>
</dbReference>
<dbReference type="PRINTS" id="PR00094">
    <property type="entry name" value="ADENYLTKNASE"/>
</dbReference>
<dbReference type="SUPFAM" id="SSF52540">
    <property type="entry name" value="P-loop containing nucleoside triphosphate hydrolases"/>
    <property type="match status" value="1"/>
</dbReference>
<reference key="1">
    <citation type="submission" date="2006-03" db="EMBL/GenBank/DDBJ databases">
        <title>Complete genome sequence of Francisella tularensis LVS (Live Vaccine Strain).</title>
        <authorList>
            <person name="Chain P."/>
            <person name="Larimer F."/>
            <person name="Land M."/>
            <person name="Stilwagen S."/>
            <person name="Larsson P."/>
            <person name="Bearden S."/>
            <person name="Chu M."/>
            <person name="Oyston P."/>
            <person name="Forsman M."/>
            <person name="Andersson S."/>
            <person name="Lindler L."/>
            <person name="Titball R."/>
            <person name="Garcia E."/>
        </authorList>
    </citation>
    <scope>NUCLEOTIDE SEQUENCE [LARGE SCALE GENOMIC DNA]</scope>
    <source>
        <strain>LVS</strain>
    </source>
</reference>
<accession>Q2A425</accession>
<name>KAD_FRATH</name>
<organism>
    <name type="scientific">Francisella tularensis subsp. holarctica (strain LVS)</name>
    <dbReference type="NCBI Taxonomy" id="376619"/>
    <lineage>
        <taxon>Bacteria</taxon>
        <taxon>Pseudomonadati</taxon>
        <taxon>Pseudomonadota</taxon>
        <taxon>Gammaproteobacteria</taxon>
        <taxon>Thiotrichales</taxon>
        <taxon>Francisellaceae</taxon>
        <taxon>Francisella</taxon>
    </lineage>
</organism>
<proteinExistence type="inferred from homology"/>
<protein>
    <recommendedName>
        <fullName evidence="1">Adenylate kinase</fullName>
        <shortName evidence="1">AK</shortName>
        <ecNumber evidence="1">2.7.4.3</ecNumber>
    </recommendedName>
    <alternativeName>
        <fullName evidence="1">ATP-AMP transphosphorylase</fullName>
    </alternativeName>
    <alternativeName>
        <fullName evidence="1">ATP:AMP phosphotransferase</fullName>
    </alternativeName>
    <alternativeName>
        <fullName evidence="1">Adenylate monophosphate kinase</fullName>
    </alternativeName>
</protein>
<comment type="function">
    <text evidence="1">Catalyzes the reversible transfer of the terminal phosphate group between ATP and AMP. Plays an important role in cellular energy homeostasis and in adenine nucleotide metabolism.</text>
</comment>
<comment type="catalytic activity">
    <reaction evidence="1">
        <text>AMP + ATP = 2 ADP</text>
        <dbReference type="Rhea" id="RHEA:12973"/>
        <dbReference type="ChEBI" id="CHEBI:30616"/>
        <dbReference type="ChEBI" id="CHEBI:456215"/>
        <dbReference type="ChEBI" id="CHEBI:456216"/>
        <dbReference type="EC" id="2.7.4.3"/>
    </reaction>
</comment>
<comment type="pathway">
    <text evidence="1">Purine metabolism; AMP biosynthesis via salvage pathway; AMP from ADP: step 1/1.</text>
</comment>
<comment type="subunit">
    <text evidence="1">Monomer.</text>
</comment>
<comment type="subcellular location">
    <subcellularLocation>
        <location evidence="1">Cytoplasm</location>
    </subcellularLocation>
</comment>
<comment type="domain">
    <text evidence="1">Consists of three domains, a large central CORE domain and two small peripheral domains, NMPbind and LID, which undergo movements during catalysis. The LID domain closes over the site of phosphoryl transfer upon ATP binding. Assembling and dissambling the active center during each catalytic cycle provides an effective means to prevent ATP hydrolysis.</text>
</comment>
<comment type="similarity">
    <text evidence="1">Belongs to the adenylate kinase family.</text>
</comment>
<keyword id="KW-0067">ATP-binding</keyword>
<keyword id="KW-0963">Cytoplasm</keyword>
<keyword id="KW-0418">Kinase</keyword>
<keyword id="KW-0545">Nucleotide biosynthesis</keyword>
<keyword id="KW-0547">Nucleotide-binding</keyword>
<keyword id="KW-1185">Reference proteome</keyword>
<keyword id="KW-0808">Transferase</keyword>
<gene>
    <name evidence="1" type="primary">adk</name>
    <name type="ordered locus">FTL_0795</name>
</gene>
<evidence type="ECO:0000255" key="1">
    <source>
        <dbReference type="HAMAP-Rule" id="MF_00235"/>
    </source>
</evidence>